<reference key="1">
    <citation type="online journal article" date="1999" name="Plant Gene Register">
        <title>Isolation of a cDNA clone encoding 1-aminocyclopropane-1-carboxylate oxidase from Dendrobium crumenatum.</title>
        <authorList>
            <person name="Yang X.-H."/>
            <person name="Pua E.-C."/>
            <person name="Goh C.-J."/>
        </authorList>
        <locator>PGR99-015</locator>
    </citation>
    <scope>NUCLEOTIDE SEQUENCE [MRNA]</scope>
    <source>
        <tissue>Flower</tissue>
    </source>
</reference>
<protein>
    <recommendedName>
        <fullName>1-aminocyclopropane-1-carboxylate oxidase</fullName>
        <shortName>ACC oxidase</shortName>
        <ecNumber>1.14.17.4</ecNumber>
    </recommendedName>
    <alternativeName>
        <fullName>Ethylene-forming enzyme</fullName>
        <shortName>EFE</shortName>
    </alternativeName>
</protein>
<sequence length="318" mass="36132">MELLEGSRRSDAMAVLRDACENWGFFELLNHGISHEPNEQSETVNKEHYREHYRRFREQRFKEFAAKTLDSGENVDGDNLDWESTFFLRHLPTSNISQVPDLDEDCGSTMKEFALGLEKLAERLLDLLCENLGLEKGYLKRVFCGGSDGLPTFGTKVSNYPPCPKPELIKGLRAHTDAGGIILLFQDDTVSGLQLLKDEEWIDVPPMRHSIVVNIGDQLEVITNGKYKSVMHRVVAQTNGNRMSIASFYNPGSDAVIFPAPELVEKEAAEKKKETYPKFVFEDYMKLYVRQKFEAKEPRFEAMKTMDAVISSQPIPTA</sequence>
<evidence type="ECO:0000250" key="1"/>
<evidence type="ECO:0000255" key="2">
    <source>
        <dbReference type="PROSITE-ProRule" id="PRU00805"/>
    </source>
</evidence>
<evidence type="ECO:0000305" key="3"/>
<accession>Q9ZQZ1</accession>
<organism>
    <name type="scientific">Dendrobium crumenatum</name>
    <name type="common">Tropical pigeon orchid</name>
    <dbReference type="NCBI Taxonomy" id="51096"/>
    <lineage>
        <taxon>Eukaryota</taxon>
        <taxon>Viridiplantae</taxon>
        <taxon>Streptophyta</taxon>
        <taxon>Embryophyta</taxon>
        <taxon>Tracheophyta</taxon>
        <taxon>Spermatophyta</taxon>
        <taxon>Magnoliopsida</taxon>
        <taxon>Liliopsida</taxon>
        <taxon>Asparagales</taxon>
        <taxon>Orchidaceae</taxon>
        <taxon>Epidendroideae</taxon>
        <taxon>Malaxideae</taxon>
        <taxon>Dendrobiinae</taxon>
        <taxon>Dendrobium</taxon>
    </lineage>
</organism>
<feature type="chain" id="PRO_0000067256" description="1-aminocyclopropane-1-carboxylate oxidase">
    <location>
        <begin position="1"/>
        <end position="318"/>
    </location>
</feature>
<feature type="domain" description="Fe2OG dioxygenase" evidence="2">
    <location>
        <begin position="151"/>
        <end position="251"/>
    </location>
</feature>
<feature type="binding site" evidence="2">
    <location>
        <position position="175"/>
    </location>
    <ligand>
        <name>Fe cation</name>
        <dbReference type="ChEBI" id="CHEBI:24875"/>
    </ligand>
</feature>
<feature type="binding site" evidence="2">
    <location>
        <position position="177"/>
    </location>
    <ligand>
        <name>Fe cation</name>
        <dbReference type="ChEBI" id="CHEBI:24875"/>
    </ligand>
</feature>
<feature type="binding site" evidence="2">
    <location>
        <position position="232"/>
    </location>
    <ligand>
        <name>Fe cation</name>
        <dbReference type="ChEBI" id="CHEBI:24875"/>
    </ligand>
</feature>
<name>ACCO_DENCR</name>
<comment type="catalytic activity">
    <reaction>
        <text>1-aminocyclopropane-1-carboxylate + L-ascorbate + O2 = ethene + L-dehydroascorbate + hydrogen cyanide + CO2 + 2 H2O</text>
        <dbReference type="Rhea" id="RHEA:23640"/>
        <dbReference type="ChEBI" id="CHEBI:15377"/>
        <dbReference type="ChEBI" id="CHEBI:15379"/>
        <dbReference type="ChEBI" id="CHEBI:16526"/>
        <dbReference type="ChEBI" id="CHEBI:18153"/>
        <dbReference type="ChEBI" id="CHEBI:18407"/>
        <dbReference type="ChEBI" id="CHEBI:38290"/>
        <dbReference type="ChEBI" id="CHEBI:58360"/>
        <dbReference type="ChEBI" id="CHEBI:58539"/>
        <dbReference type="EC" id="1.14.17.4"/>
    </reaction>
</comment>
<comment type="cofactor">
    <cofactor evidence="1">
        <name>Fe cation</name>
        <dbReference type="ChEBI" id="CHEBI:24875"/>
    </cofactor>
</comment>
<comment type="pathway">
    <text>Alkene biosynthesis; ethylene biosynthesis via S-adenosyl-L-methionine; ethylene from S-adenosyl-L-methionine: step 2/2.</text>
</comment>
<comment type="similarity">
    <text evidence="3">Belongs to the iron/ascorbate-dependent oxidoreductase family.</text>
</comment>
<keyword id="KW-0266">Ethylene biosynthesis</keyword>
<keyword id="KW-0292">Fruit ripening</keyword>
<keyword id="KW-0408">Iron</keyword>
<keyword id="KW-0479">Metal-binding</keyword>
<keyword id="KW-0560">Oxidoreductase</keyword>
<keyword id="KW-0847">Vitamin C</keyword>
<dbReference type="EC" id="1.14.17.4"/>
<dbReference type="EMBL" id="AF038840">
    <property type="protein sequence ID" value="AAD02104.1"/>
    <property type="molecule type" value="mRNA"/>
</dbReference>
<dbReference type="SMR" id="Q9ZQZ1"/>
<dbReference type="UniPathway" id="UPA00384">
    <property type="reaction ID" value="UER00563"/>
</dbReference>
<dbReference type="GO" id="GO:0009815">
    <property type="term" value="F:1-aminocyclopropane-1-carboxylate oxidase activity"/>
    <property type="evidence" value="ECO:0007669"/>
    <property type="project" value="UniProtKB-EC"/>
</dbReference>
<dbReference type="GO" id="GO:0031418">
    <property type="term" value="F:L-ascorbic acid binding"/>
    <property type="evidence" value="ECO:0007669"/>
    <property type="project" value="UniProtKB-KW"/>
</dbReference>
<dbReference type="GO" id="GO:0046872">
    <property type="term" value="F:metal ion binding"/>
    <property type="evidence" value="ECO:0007669"/>
    <property type="project" value="UniProtKB-KW"/>
</dbReference>
<dbReference type="GO" id="GO:0009693">
    <property type="term" value="P:ethylene biosynthetic process"/>
    <property type="evidence" value="ECO:0007669"/>
    <property type="project" value="UniProtKB-UniPathway"/>
</dbReference>
<dbReference type="GO" id="GO:0009835">
    <property type="term" value="P:fruit ripening"/>
    <property type="evidence" value="ECO:0007669"/>
    <property type="project" value="UniProtKB-KW"/>
</dbReference>
<dbReference type="FunFam" id="2.60.120.330:FF:000010">
    <property type="entry name" value="1-aminocyclopropane-1-carboxylate oxidase 1"/>
    <property type="match status" value="1"/>
</dbReference>
<dbReference type="Gene3D" id="2.60.120.330">
    <property type="entry name" value="B-lactam Antibiotic, Isopenicillin N Synthase, Chain"/>
    <property type="match status" value="1"/>
</dbReference>
<dbReference type="InterPro" id="IPR026992">
    <property type="entry name" value="DIOX_N"/>
</dbReference>
<dbReference type="InterPro" id="IPR044861">
    <property type="entry name" value="IPNS-like_FE2OG_OXY"/>
</dbReference>
<dbReference type="InterPro" id="IPR027443">
    <property type="entry name" value="IPNS-like_sf"/>
</dbReference>
<dbReference type="InterPro" id="IPR005123">
    <property type="entry name" value="Oxoglu/Fe-dep_dioxygenase_dom"/>
</dbReference>
<dbReference type="InterPro" id="IPR050295">
    <property type="entry name" value="Plant_2OG-oxidoreductases"/>
</dbReference>
<dbReference type="PANTHER" id="PTHR47991">
    <property type="entry name" value="OXOGLUTARATE/IRON-DEPENDENT DIOXYGENASE"/>
    <property type="match status" value="1"/>
</dbReference>
<dbReference type="Pfam" id="PF03171">
    <property type="entry name" value="2OG-FeII_Oxy"/>
    <property type="match status" value="1"/>
</dbReference>
<dbReference type="Pfam" id="PF14226">
    <property type="entry name" value="DIOX_N"/>
    <property type="match status" value="1"/>
</dbReference>
<dbReference type="SUPFAM" id="SSF51197">
    <property type="entry name" value="Clavaminate synthase-like"/>
    <property type="match status" value="1"/>
</dbReference>
<dbReference type="PROSITE" id="PS51471">
    <property type="entry name" value="FE2OG_OXY"/>
    <property type="match status" value="1"/>
</dbReference>
<gene>
    <name type="primary">ACO</name>
</gene>
<proteinExistence type="evidence at transcript level"/>